<keyword id="KW-0238">DNA-binding</keyword>
<keyword id="KW-0479">Metal-binding</keyword>
<keyword id="KW-0539">Nucleus</keyword>
<keyword id="KW-1185">Reference proteome</keyword>
<keyword id="KW-0677">Repeat</keyword>
<keyword id="KW-0678">Repressor</keyword>
<keyword id="KW-0804">Transcription</keyword>
<keyword id="KW-0805">Transcription regulation</keyword>
<keyword id="KW-0862">Zinc</keyword>
<keyword id="KW-0863">Zinc-finger</keyword>
<dbReference type="EMBL" id="AB030732">
    <property type="protein sequence ID" value="BAA85109.1"/>
    <property type="molecule type" value="Genomic_DNA"/>
</dbReference>
<dbReference type="EMBL" id="AB008267">
    <property type="protein sequence ID" value="BAB08281.1"/>
    <property type="molecule type" value="Genomic_DNA"/>
</dbReference>
<dbReference type="EMBL" id="CP002688">
    <property type="protein sequence ID" value="AED94918.1"/>
    <property type="molecule type" value="Genomic_DNA"/>
</dbReference>
<dbReference type="EMBL" id="BT024582">
    <property type="protein sequence ID" value="ABD42980.1"/>
    <property type="molecule type" value="mRNA"/>
</dbReference>
<dbReference type="EMBL" id="AY088887">
    <property type="protein sequence ID" value="AAM67193.1"/>
    <property type="molecule type" value="mRNA"/>
</dbReference>
<dbReference type="RefSeq" id="NP_199131.1">
    <property type="nucleotide sequence ID" value="NM_123683.2"/>
</dbReference>
<dbReference type="BioGRID" id="19584">
    <property type="interactions" value="7"/>
</dbReference>
<dbReference type="IntAct" id="Q9SSW0">
    <property type="interactions" value="4"/>
</dbReference>
<dbReference type="STRING" id="3702.Q9SSW0"/>
<dbReference type="PaxDb" id="3702-AT5G43170.1"/>
<dbReference type="EnsemblPlants" id="AT5G43170.1">
    <property type="protein sequence ID" value="AT5G43170.1"/>
    <property type="gene ID" value="AT5G43170"/>
</dbReference>
<dbReference type="GeneID" id="834334"/>
<dbReference type="Gramene" id="AT5G43170.1">
    <property type="protein sequence ID" value="AT5G43170.1"/>
    <property type="gene ID" value="AT5G43170"/>
</dbReference>
<dbReference type="KEGG" id="ath:AT5G43170"/>
<dbReference type="Araport" id="AT5G43170"/>
<dbReference type="TAIR" id="AT5G43170">
    <property type="gene designation" value="ZF3"/>
</dbReference>
<dbReference type="eggNOG" id="KOG1721">
    <property type="taxonomic scope" value="Eukaryota"/>
</dbReference>
<dbReference type="HOGENOM" id="CLU_059471_1_2_1"/>
<dbReference type="InParanoid" id="Q9SSW0"/>
<dbReference type="OMA" id="NGVEQWT"/>
<dbReference type="PhylomeDB" id="Q9SSW0"/>
<dbReference type="PRO" id="PR:Q9SSW0"/>
<dbReference type="Proteomes" id="UP000006548">
    <property type="component" value="Chromosome 5"/>
</dbReference>
<dbReference type="ExpressionAtlas" id="Q9SSW0">
    <property type="expression patterns" value="baseline and differential"/>
</dbReference>
<dbReference type="GO" id="GO:0005634">
    <property type="term" value="C:nucleus"/>
    <property type="evidence" value="ECO:0000314"/>
    <property type="project" value="TAIR"/>
</dbReference>
<dbReference type="GO" id="GO:0003677">
    <property type="term" value="F:DNA binding"/>
    <property type="evidence" value="ECO:0000250"/>
    <property type="project" value="TAIR"/>
</dbReference>
<dbReference type="GO" id="GO:0003700">
    <property type="term" value="F:DNA-binding transcription factor activity"/>
    <property type="evidence" value="ECO:0000250"/>
    <property type="project" value="TAIR"/>
</dbReference>
<dbReference type="GO" id="GO:0043565">
    <property type="term" value="F:sequence-specific DNA binding"/>
    <property type="evidence" value="ECO:0000314"/>
    <property type="project" value="TAIR"/>
</dbReference>
<dbReference type="GO" id="GO:0000976">
    <property type="term" value="F:transcription cis-regulatory region binding"/>
    <property type="evidence" value="ECO:0000353"/>
    <property type="project" value="TAIR"/>
</dbReference>
<dbReference type="GO" id="GO:0008270">
    <property type="term" value="F:zinc ion binding"/>
    <property type="evidence" value="ECO:0007669"/>
    <property type="project" value="UniProtKB-KW"/>
</dbReference>
<dbReference type="GO" id="GO:0042538">
    <property type="term" value="P:hyperosmotic salinity response"/>
    <property type="evidence" value="ECO:0000270"/>
    <property type="project" value="TAIR"/>
</dbReference>
<dbReference type="GO" id="GO:0045892">
    <property type="term" value="P:negative regulation of DNA-templated transcription"/>
    <property type="evidence" value="ECO:0000314"/>
    <property type="project" value="TAIR"/>
</dbReference>
<dbReference type="GO" id="GO:0009409">
    <property type="term" value="P:response to cold"/>
    <property type="evidence" value="ECO:0000270"/>
    <property type="project" value="TAIR"/>
</dbReference>
<dbReference type="FunFam" id="3.30.160.60:FF:000446">
    <property type="entry name" value="Zinc finger protein"/>
    <property type="match status" value="1"/>
</dbReference>
<dbReference type="Gene3D" id="3.30.160.60">
    <property type="entry name" value="Classic Zinc Finger"/>
    <property type="match status" value="1"/>
</dbReference>
<dbReference type="InterPro" id="IPR044653">
    <property type="entry name" value="AZF1/2/3-like"/>
</dbReference>
<dbReference type="InterPro" id="IPR036236">
    <property type="entry name" value="Znf_C2H2_sf"/>
</dbReference>
<dbReference type="InterPro" id="IPR013087">
    <property type="entry name" value="Znf_C2H2_type"/>
</dbReference>
<dbReference type="PANTHER" id="PTHR45988">
    <property type="entry name" value="C2H2 TYPE ZINC FINGER TRANSCRIPTION FACTOR FAMILY-RELATED"/>
    <property type="match status" value="1"/>
</dbReference>
<dbReference type="PANTHER" id="PTHR45988:SF61">
    <property type="entry name" value="ZINC FINGER PROTEIN AZF3-RELATED"/>
    <property type="match status" value="1"/>
</dbReference>
<dbReference type="Pfam" id="PF13912">
    <property type="entry name" value="zf-C2H2_6"/>
    <property type="match status" value="2"/>
</dbReference>
<dbReference type="SMART" id="SM00355">
    <property type="entry name" value="ZnF_C2H2"/>
    <property type="match status" value="2"/>
</dbReference>
<dbReference type="SUPFAM" id="SSF57667">
    <property type="entry name" value="beta-beta-alpha zinc fingers"/>
    <property type="match status" value="1"/>
</dbReference>
<dbReference type="PROSITE" id="PS00028">
    <property type="entry name" value="ZINC_FINGER_C2H2_1"/>
    <property type="match status" value="2"/>
</dbReference>
<dbReference type="PROSITE" id="PS50157">
    <property type="entry name" value="ZINC_FINGER_C2H2_2"/>
    <property type="match status" value="2"/>
</dbReference>
<proteinExistence type="evidence at protein level"/>
<gene>
    <name type="primary">AZF3</name>
    <name type="synonym">ZF3</name>
    <name type="ordered locus">At5g43170</name>
    <name type="ORF">MMG4.21</name>
</gene>
<accession>Q9SSW0</accession>
<accession>Q8L8P4</accession>
<comment type="function">
    <text evidence="3">Transcriptional repressor probably involved in abiotic stress responses. Binds DNA in a sequence-specific manner and can repress the transactivation activity of other transcription factors.</text>
</comment>
<comment type="interaction">
    <interactant intactId="EBI-1807790">
        <id>Q9SSW0</id>
    </interactant>
    <interactant intactId="EBI-1100967">
        <id>Q7G8V2</id>
        <label>ARR15</label>
    </interactant>
    <organismsDiffer>false</organismsDiffer>
    <experiments>2</experiments>
</comment>
<comment type="subcellular location">
    <subcellularLocation>
        <location evidence="3 4">Nucleus</location>
    </subcellularLocation>
</comment>
<comment type="tissue specificity">
    <text evidence="2 3">Expressed in roots.</text>
</comment>
<comment type="induction">
    <text evidence="2 3 4">By abscisic acid (ABA), ethylene, salt, cold and heat.</text>
</comment>
<evidence type="ECO:0000255" key="1">
    <source>
        <dbReference type="PROSITE-ProRule" id="PRU00042"/>
    </source>
</evidence>
<evidence type="ECO:0000269" key="2">
    <source>
    </source>
</evidence>
<evidence type="ECO:0000269" key="3">
    <source>
    </source>
</evidence>
<evidence type="ECO:0000269" key="4">
    <source>
    </source>
</evidence>
<evidence type="ECO:0000305" key="5"/>
<protein>
    <recommendedName>
        <fullName>Zinc finger protein AZF3</fullName>
    </recommendedName>
    <alternativeName>
        <fullName>Zinc-finger protein 3</fullName>
    </alternativeName>
</protein>
<name>AZF3_ARATH</name>
<reference key="1">
    <citation type="journal article" date="2000" name="Gene">
        <title>Expression of a subset of the Arabidopsis Cys(2)/His(2)-type zinc-finger protein gene family under water stress.</title>
        <authorList>
            <person name="Sakamoto H."/>
            <person name="Araki T."/>
            <person name="Meshi T."/>
            <person name="Iwabuchi M."/>
        </authorList>
    </citation>
    <scope>NUCLEOTIDE SEQUENCE [GENOMIC DNA]</scope>
    <scope>TISSUE SPECIFICITY</scope>
    <scope>INDUCTION</scope>
    <source>
        <strain>cv. Columbia</strain>
    </source>
</reference>
<reference key="2">
    <citation type="journal article" date="1997" name="DNA Res.">
        <title>Structural analysis of Arabidopsis thaliana chromosome 5. III. Sequence features of the regions of 1,191,918 bp covered by seventeen physically assigned P1 clones.</title>
        <authorList>
            <person name="Nakamura Y."/>
            <person name="Sato S."/>
            <person name="Kaneko T."/>
            <person name="Kotani H."/>
            <person name="Asamizu E."/>
            <person name="Miyajima N."/>
            <person name="Tabata S."/>
        </authorList>
    </citation>
    <scope>NUCLEOTIDE SEQUENCE [LARGE SCALE GENOMIC DNA]</scope>
    <source>
        <strain>cv. Columbia</strain>
    </source>
</reference>
<reference key="3">
    <citation type="journal article" date="2017" name="Plant J.">
        <title>Araport11: a complete reannotation of the Arabidopsis thaliana reference genome.</title>
        <authorList>
            <person name="Cheng C.Y."/>
            <person name="Krishnakumar V."/>
            <person name="Chan A.P."/>
            <person name="Thibaud-Nissen F."/>
            <person name="Schobel S."/>
            <person name="Town C.D."/>
        </authorList>
    </citation>
    <scope>GENOME REANNOTATION</scope>
    <source>
        <strain>cv. Columbia</strain>
    </source>
</reference>
<reference key="4">
    <citation type="submission" date="2006-02" db="EMBL/GenBank/DDBJ databases">
        <title>Arabidopsis ORF clones.</title>
        <authorList>
            <person name="Shinn P."/>
            <person name="Chen H."/>
            <person name="Kim C.J."/>
            <person name="Ecker J.R."/>
        </authorList>
    </citation>
    <scope>NUCLEOTIDE SEQUENCE [LARGE SCALE MRNA]</scope>
    <source>
        <strain>cv. Columbia</strain>
    </source>
</reference>
<reference key="5">
    <citation type="submission" date="2002-03" db="EMBL/GenBank/DDBJ databases">
        <title>Full-length cDNA from Arabidopsis thaliana.</title>
        <authorList>
            <person name="Brover V.V."/>
            <person name="Troukhan M.E."/>
            <person name="Alexandrov N.A."/>
            <person name="Lu Y.-P."/>
            <person name="Flavell R.B."/>
            <person name="Feldmann K.A."/>
        </authorList>
    </citation>
    <scope>NUCLEOTIDE SEQUENCE [LARGE SCALE MRNA]</scope>
</reference>
<reference key="6">
    <citation type="journal article" date="2004" name="Plant Physiol.">
        <title>Arabidopsis Cys2/His2-type zinc-finger proteins function as transcription repressors under drought, cold, and high-salinity stress conditions.</title>
        <authorList>
            <person name="Sakamoto H."/>
            <person name="Maruyama K."/>
            <person name="Sakuma Y."/>
            <person name="Meshi T."/>
            <person name="Iwabuchi M."/>
            <person name="Shinozaki K."/>
            <person name="Yamaguchi-Shinozaki K."/>
        </authorList>
    </citation>
    <scope>FUNCTION</scope>
    <scope>SUBCELLULAR LOCATION</scope>
    <scope>TISSUE SPECIFICITY</scope>
    <scope>INDUCTION</scope>
</reference>
<reference key="7">
    <citation type="journal article" date="2011" name="Plant Physiol.">
        <title>Arabidopsis Cys2/His2 zinc-finger proteins AZF1 and AZF2 negatively regulate abscisic acid-repressive and auxin-inducible genes under abiotic stress conditions.</title>
        <authorList>
            <person name="Kodaira K.S."/>
            <person name="Qin F."/>
            <person name="Tran L.S."/>
            <person name="Maruyama K."/>
            <person name="Kidokoro S."/>
            <person name="Fujita Y."/>
            <person name="Shinozaki K."/>
            <person name="Yamaguchi-Shinozaki K."/>
        </authorList>
    </citation>
    <scope>SUBCELLULAR LOCATION</scope>
    <scope>INDUCTION</scope>
</reference>
<sequence>MALEALNSPRLVEDPLRFNGVEQWTKCKKRSKRSRSDLHHNHRLTEEEYLAFCLMLLARDGGDLDSVTVAEKPSYKCGVCYKTFSSYQALGGHKASHRSLYGGGENDKSTPSTAVKSHVCSVCGKSFATGQALGGHKRCHYDGGVSNSEGVGSTSHVSSSSHRGFDLNIIPVQGFSPDDEVMSPMATKKPRLK</sequence>
<feature type="chain" id="PRO_0000421828" description="Zinc finger protein AZF3">
    <location>
        <begin position="1"/>
        <end position="193"/>
    </location>
</feature>
<feature type="zinc finger region" description="C2H2-type 1" evidence="1">
    <location>
        <begin position="75"/>
        <end position="97"/>
    </location>
</feature>
<feature type="zinc finger region" description="C2H2-type 2" evidence="1">
    <location>
        <begin position="118"/>
        <end position="140"/>
    </location>
</feature>
<feature type="sequence conflict" description="In Ref. 5; AAM67193." evidence="5" ref="5">
    <original>A</original>
    <variation>E</variation>
    <location>
        <position position="70"/>
    </location>
</feature>
<feature type="sequence conflict" description="In Ref. 5; AAM67193." evidence="5" ref="5">
    <original>E</original>
    <variation>D</variation>
    <location>
        <position position="105"/>
    </location>
</feature>
<feature type="sequence conflict" description="In Ref. 5; AAM67193." evidence="5" ref="5">
    <original>I</original>
    <variation>L</variation>
    <location>
        <position position="170"/>
    </location>
</feature>
<feature type="sequence conflict" description="In Ref. 5; AAM67193." evidence="5" ref="5">
    <original>P</original>
    <variation>R</variation>
    <location>
        <position position="177"/>
    </location>
</feature>
<organism>
    <name type="scientific">Arabidopsis thaliana</name>
    <name type="common">Mouse-ear cress</name>
    <dbReference type="NCBI Taxonomy" id="3702"/>
    <lineage>
        <taxon>Eukaryota</taxon>
        <taxon>Viridiplantae</taxon>
        <taxon>Streptophyta</taxon>
        <taxon>Embryophyta</taxon>
        <taxon>Tracheophyta</taxon>
        <taxon>Spermatophyta</taxon>
        <taxon>Magnoliopsida</taxon>
        <taxon>eudicotyledons</taxon>
        <taxon>Gunneridae</taxon>
        <taxon>Pentapetalae</taxon>
        <taxon>rosids</taxon>
        <taxon>malvids</taxon>
        <taxon>Brassicales</taxon>
        <taxon>Brassicaceae</taxon>
        <taxon>Camelineae</taxon>
        <taxon>Arabidopsis</taxon>
    </lineage>
</organism>